<feature type="chain" id="PRO_0000181675" description="tRNA(Ile)-lysidine synthase">
    <location>
        <begin position="1"/>
        <end position="319"/>
    </location>
</feature>
<feature type="binding site" evidence="1">
    <location>
        <begin position="32"/>
        <end position="37"/>
    </location>
    <ligand>
        <name>ATP</name>
        <dbReference type="ChEBI" id="CHEBI:30616"/>
    </ligand>
</feature>
<accession>Q9Z6R2</accession>
<accession>Q7AHZ3</accession>
<accession>Q7BWN3</accession>
<accession>Q7DE64</accession>
<name>TILS_CHLPN</name>
<comment type="function">
    <text evidence="1">Ligates lysine onto the cytidine present at position 34 of the AUA codon-specific tRNA(Ile) that contains the anticodon CAU, in an ATP-dependent manner. Cytidine is converted to lysidine, thus changing the amino acid specificity of the tRNA from methionine to isoleucine.</text>
</comment>
<comment type="catalytic activity">
    <reaction evidence="1">
        <text>cytidine(34) in tRNA(Ile2) + L-lysine + ATP = lysidine(34) in tRNA(Ile2) + AMP + diphosphate + H(+)</text>
        <dbReference type="Rhea" id="RHEA:43744"/>
        <dbReference type="Rhea" id="RHEA-COMP:10625"/>
        <dbReference type="Rhea" id="RHEA-COMP:10670"/>
        <dbReference type="ChEBI" id="CHEBI:15378"/>
        <dbReference type="ChEBI" id="CHEBI:30616"/>
        <dbReference type="ChEBI" id="CHEBI:32551"/>
        <dbReference type="ChEBI" id="CHEBI:33019"/>
        <dbReference type="ChEBI" id="CHEBI:82748"/>
        <dbReference type="ChEBI" id="CHEBI:83665"/>
        <dbReference type="ChEBI" id="CHEBI:456215"/>
        <dbReference type="EC" id="6.3.4.19"/>
    </reaction>
</comment>
<comment type="subcellular location">
    <subcellularLocation>
        <location evidence="1">Cytoplasm</location>
    </subcellularLocation>
</comment>
<comment type="domain">
    <text>The N-terminal region contains the highly conserved SGGXDS motif, predicted to be a P-loop motif involved in ATP binding.</text>
</comment>
<comment type="similarity">
    <text evidence="1">Belongs to the tRNA(Ile)-lysidine synthase family.</text>
</comment>
<keyword id="KW-0067">ATP-binding</keyword>
<keyword id="KW-0963">Cytoplasm</keyword>
<keyword id="KW-0436">Ligase</keyword>
<keyword id="KW-0547">Nucleotide-binding</keyword>
<keyword id="KW-0819">tRNA processing</keyword>
<protein>
    <recommendedName>
        <fullName evidence="1">tRNA(Ile)-lysidine synthase</fullName>
        <ecNumber evidence="1">6.3.4.19</ecNumber>
    </recommendedName>
    <alternativeName>
        <fullName evidence="1">tRNA(Ile)-2-lysyl-cytidine synthase</fullName>
    </alternativeName>
    <alternativeName>
        <fullName evidence="1">tRNA(Ile)-lysidine synthetase</fullName>
    </alternativeName>
</protein>
<reference key="1">
    <citation type="journal article" date="1999" name="Nat. Genet.">
        <title>Comparative genomes of Chlamydia pneumoniae and C. trachomatis.</title>
        <authorList>
            <person name="Kalman S."/>
            <person name="Mitchell W.P."/>
            <person name="Marathe R."/>
            <person name="Lammel C.J."/>
            <person name="Fan J."/>
            <person name="Hyman R.W."/>
            <person name="Olinger L."/>
            <person name="Grimwood J."/>
            <person name="Davis R.W."/>
            <person name="Stephens R.S."/>
        </authorList>
    </citation>
    <scope>NUCLEOTIDE SEQUENCE [LARGE SCALE GENOMIC DNA]</scope>
    <source>
        <strain>CWL029</strain>
    </source>
</reference>
<reference key="2">
    <citation type="journal article" date="2000" name="Nucleic Acids Res.">
        <title>Genome sequences of Chlamydia trachomatis MoPn and Chlamydia pneumoniae AR39.</title>
        <authorList>
            <person name="Read T.D."/>
            <person name="Brunham R.C."/>
            <person name="Shen C."/>
            <person name="Gill S.R."/>
            <person name="Heidelberg J.F."/>
            <person name="White O."/>
            <person name="Hickey E.K."/>
            <person name="Peterson J.D."/>
            <person name="Utterback T.R."/>
            <person name="Berry K.J."/>
            <person name="Bass S."/>
            <person name="Linher K.D."/>
            <person name="Weidman J.F."/>
            <person name="Khouri H.M."/>
            <person name="Craven B."/>
            <person name="Bowman C."/>
            <person name="Dodson R.J."/>
            <person name="Gwinn M.L."/>
            <person name="Nelson W.C."/>
            <person name="DeBoy R.T."/>
            <person name="Kolonay J.F."/>
            <person name="McClarty G."/>
            <person name="Salzberg S.L."/>
            <person name="Eisen J.A."/>
            <person name="Fraser C.M."/>
        </authorList>
    </citation>
    <scope>NUCLEOTIDE SEQUENCE [LARGE SCALE GENOMIC DNA]</scope>
    <source>
        <strain>AR39</strain>
    </source>
</reference>
<reference key="3">
    <citation type="journal article" date="2000" name="Nucleic Acids Res.">
        <title>Comparison of whole genome sequences of Chlamydia pneumoniae J138 from Japan and CWL029 from USA.</title>
        <authorList>
            <person name="Shirai M."/>
            <person name="Hirakawa H."/>
            <person name="Kimoto M."/>
            <person name="Tabuchi M."/>
            <person name="Kishi F."/>
            <person name="Ouchi K."/>
            <person name="Shiba T."/>
            <person name="Ishii K."/>
            <person name="Hattori M."/>
            <person name="Kuhara S."/>
            <person name="Nakazawa T."/>
        </authorList>
    </citation>
    <scope>NUCLEOTIDE SEQUENCE [LARGE SCALE GENOMIC DNA]</scope>
    <source>
        <strain>J138</strain>
    </source>
</reference>
<reference key="4">
    <citation type="submission" date="2002-05" db="EMBL/GenBank/DDBJ databases">
        <title>The genome sequence of Chlamydia pneumoniae TW183 and comparison with other Chlamydia strains based on whole genome sequence analysis.</title>
        <authorList>
            <person name="Geng M.M."/>
            <person name="Schuhmacher A."/>
            <person name="Muehldorfer I."/>
            <person name="Bensch K.W."/>
            <person name="Schaefer K.P."/>
            <person name="Schneider S."/>
            <person name="Pohl T."/>
            <person name="Essig A."/>
            <person name="Marre R."/>
            <person name="Melchers K."/>
        </authorList>
    </citation>
    <scope>NUCLEOTIDE SEQUENCE [LARGE SCALE GENOMIC DNA]</scope>
    <source>
        <strain>TW-183</strain>
    </source>
</reference>
<dbReference type="EC" id="6.3.4.19" evidence="1"/>
<dbReference type="EMBL" id="AE001363">
    <property type="protein sequence ID" value="AAD19134.1"/>
    <property type="molecule type" value="Genomic_DNA"/>
</dbReference>
<dbReference type="EMBL" id="AE002161">
    <property type="protein sequence ID" value="AAF38647.1"/>
    <property type="molecule type" value="Genomic_DNA"/>
</dbReference>
<dbReference type="EMBL" id="BA000008">
    <property type="protein sequence ID" value="BAA99204.1"/>
    <property type="molecule type" value="Genomic_DNA"/>
</dbReference>
<dbReference type="EMBL" id="AE009440">
    <property type="protein sequence ID" value="AAP98964.1"/>
    <property type="molecule type" value="Genomic_DNA"/>
</dbReference>
<dbReference type="PIR" id="B86615">
    <property type="entry name" value="B86615"/>
</dbReference>
<dbReference type="PIR" id="E72009">
    <property type="entry name" value="E72009"/>
</dbReference>
<dbReference type="RefSeq" id="NP_225191.1">
    <property type="nucleotide sequence ID" value="NC_000922.1"/>
</dbReference>
<dbReference type="RefSeq" id="WP_010883630.1">
    <property type="nucleotide sequence ID" value="NZ_LN847257.1"/>
</dbReference>
<dbReference type="SMR" id="Q9Z6R2"/>
<dbReference type="STRING" id="406984.CPK_ORF00422"/>
<dbReference type="GeneID" id="45051054"/>
<dbReference type="KEGG" id="cpa:CP_0858"/>
<dbReference type="KEGG" id="cpj:mesJ"/>
<dbReference type="KEGG" id="cpn:CPn_0997"/>
<dbReference type="KEGG" id="cpt:CpB1035"/>
<dbReference type="PATRIC" id="fig|115713.3.peg.1092"/>
<dbReference type="eggNOG" id="COG0037">
    <property type="taxonomic scope" value="Bacteria"/>
</dbReference>
<dbReference type="HOGENOM" id="CLU_870675_0_0_0"/>
<dbReference type="OrthoDB" id="9807403at2"/>
<dbReference type="Proteomes" id="UP000000583">
    <property type="component" value="Chromosome"/>
</dbReference>
<dbReference type="Proteomes" id="UP000000801">
    <property type="component" value="Chromosome"/>
</dbReference>
<dbReference type="GO" id="GO:0005737">
    <property type="term" value="C:cytoplasm"/>
    <property type="evidence" value="ECO:0007669"/>
    <property type="project" value="UniProtKB-SubCell"/>
</dbReference>
<dbReference type="GO" id="GO:0005524">
    <property type="term" value="F:ATP binding"/>
    <property type="evidence" value="ECO:0007669"/>
    <property type="project" value="UniProtKB-UniRule"/>
</dbReference>
<dbReference type="GO" id="GO:0032267">
    <property type="term" value="F:tRNA(Ile)-lysidine synthase activity"/>
    <property type="evidence" value="ECO:0007669"/>
    <property type="project" value="UniProtKB-EC"/>
</dbReference>
<dbReference type="GO" id="GO:0006400">
    <property type="term" value="P:tRNA modification"/>
    <property type="evidence" value="ECO:0007669"/>
    <property type="project" value="UniProtKB-UniRule"/>
</dbReference>
<dbReference type="CDD" id="cd01992">
    <property type="entry name" value="TilS_N"/>
    <property type="match status" value="1"/>
</dbReference>
<dbReference type="Gene3D" id="3.40.50.620">
    <property type="entry name" value="HUPs"/>
    <property type="match status" value="1"/>
</dbReference>
<dbReference type="HAMAP" id="MF_01161">
    <property type="entry name" value="tRNA_Ile_lys_synt"/>
    <property type="match status" value="1"/>
</dbReference>
<dbReference type="InterPro" id="IPR014729">
    <property type="entry name" value="Rossmann-like_a/b/a_fold"/>
</dbReference>
<dbReference type="InterPro" id="IPR011063">
    <property type="entry name" value="TilS/TtcA_N"/>
</dbReference>
<dbReference type="InterPro" id="IPR012094">
    <property type="entry name" value="tRNA_Ile_lys_synt"/>
</dbReference>
<dbReference type="InterPro" id="IPR012795">
    <property type="entry name" value="tRNA_Ile_lys_synt_N"/>
</dbReference>
<dbReference type="NCBIfam" id="TIGR02432">
    <property type="entry name" value="lysidine_TilS_N"/>
    <property type="match status" value="1"/>
</dbReference>
<dbReference type="PANTHER" id="PTHR43033">
    <property type="entry name" value="TRNA(ILE)-LYSIDINE SYNTHASE-RELATED"/>
    <property type="match status" value="1"/>
</dbReference>
<dbReference type="PANTHER" id="PTHR43033:SF1">
    <property type="entry name" value="TRNA(ILE)-LYSIDINE SYNTHASE-RELATED"/>
    <property type="match status" value="1"/>
</dbReference>
<dbReference type="Pfam" id="PF01171">
    <property type="entry name" value="ATP_bind_3"/>
    <property type="match status" value="1"/>
</dbReference>
<dbReference type="SUPFAM" id="SSF52402">
    <property type="entry name" value="Adenine nucleotide alpha hydrolases-like"/>
    <property type="match status" value="1"/>
</dbReference>
<gene>
    <name evidence="1" type="primary">tilS</name>
    <name type="ordered locus">CPn_0997</name>
    <name type="ordered locus">CP_0858</name>
    <name type="ordered locus">CpB1035</name>
</gene>
<sequence length="319" mass="36499">MVLSSDLLRDDKQLDLFFASLDVKKRYLLALSGGSDSLFLFYLLKERGVSFTAVHIDHGWRSTSAQEAKELEELCAREGVPFVLYTLTAEEQGDKDLENQARKKRYAFLYESYRQLDAGGIFLAHHANDQAETVLKRLLESAHLTNLKAMAERSYVEDVLLLRPLLHIPKSSLKEALDARGISYLQDPSNEDERYLRARMRKKLFPWLEEVFGKNITFPLLTLGEESAELSEYLEKQAQPFFSAATHQDSQGELPCPDCLIQQAFLCKWVMKKFFNNAGIAVSRHFLQMVYDHLSRSSCATLRMRNKIVIIKPGVVVID</sequence>
<evidence type="ECO:0000255" key="1">
    <source>
        <dbReference type="HAMAP-Rule" id="MF_01161"/>
    </source>
</evidence>
<proteinExistence type="inferred from homology"/>
<organism>
    <name type="scientific">Chlamydia pneumoniae</name>
    <name type="common">Chlamydophila pneumoniae</name>
    <dbReference type="NCBI Taxonomy" id="83558"/>
    <lineage>
        <taxon>Bacteria</taxon>
        <taxon>Pseudomonadati</taxon>
        <taxon>Chlamydiota</taxon>
        <taxon>Chlamydiia</taxon>
        <taxon>Chlamydiales</taxon>
        <taxon>Chlamydiaceae</taxon>
        <taxon>Chlamydia/Chlamydophila group</taxon>
        <taxon>Chlamydia</taxon>
    </lineage>
</organism>